<protein>
    <recommendedName>
        <fullName evidence="1">N-acetylmuramic acid 6-phosphate etherase</fullName>
        <shortName evidence="1">MurNAc-6-P etherase</shortName>
        <ecNumber evidence="1">4.2.1.126</ecNumber>
    </recommendedName>
    <alternativeName>
        <fullName evidence="1">N-acetylmuramic acid 6-phosphate hydrolase</fullName>
    </alternativeName>
    <alternativeName>
        <fullName evidence="1">N-acetylmuramic acid 6-phosphate lyase</fullName>
    </alternativeName>
</protein>
<accession>A0QNX1</accession>
<accession>I7G2M8</accession>
<dbReference type="EC" id="4.2.1.126" evidence="1"/>
<dbReference type="EMBL" id="CP000480">
    <property type="protein sequence ID" value="ABK74684.1"/>
    <property type="molecule type" value="Genomic_DNA"/>
</dbReference>
<dbReference type="EMBL" id="CP001663">
    <property type="protein sequence ID" value="AFP36669.1"/>
    <property type="molecule type" value="Genomic_DNA"/>
</dbReference>
<dbReference type="RefSeq" id="WP_011726731.1">
    <property type="nucleotide sequence ID" value="NZ_SIJM01000066.1"/>
</dbReference>
<dbReference type="RefSeq" id="YP_884609.1">
    <property type="nucleotide sequence ID" value="NC_008596.1"/>
</dbReference>
<dbReference type="SMR" id="A0QNX1"/>
<dbReference type="STRING" id="246196.MSMEG_0193"/>
<dbReference type="PaxDb" id="246196-MSMEI_0188"/>
<dbReference type="GeneID" id="93455117"/>
<dbReference type="KEGG" id="msb:LJ00_00975"/>
<dbReference type="KEGG" id="msg:MSMEI_0188"/>
<dbReference type="KEGG" id="msm:MSMEG_0193"/>
<dbReference type="PATRIC" id="fig|246196.19.peg.189"/>
<dbReference type="eggNOG" id="COG2103">
    <property type="taxonomic scope" value="Bacteria"/>
</dbReference>
<dbReference type="OrthoDB" id="9813395at2"/>
<dbReference type="UniPathway" id="UPA00342"/>
<dbReference type="Proteomes" id="UP000000757">
    <property type="component" value="Chromosome"/>
</dbReference>
<dbReference type="Proteomes" id="UP000006158">
    <property type="component" value="Chromosome"/>
</dbReference>
<dbReference type="GO" id="GO:0097367">
    <property type="term" value="F:carbohydrate derivative binding"/>
    <property type="evidence" value="ECO:0007669"/>
    <property type="project" value="InterPro"/>
</dbReference>
<dbReference type="GO" id="GO:0016835">
    <property type="term" value="F:carbon-oxygen lyase activity"/>
    <property type="evidence" value="ECO:0007669"/>
    <property type="project" value="UniProtKB-UniRule"/>
</dbReference>
<dbReference type="GO" id="GO:0016803">
    <property type="term" value="F:ether hydrolase activity"/>
    <property type="evidence" value="ECO:0007669"/>
    <property type="project" value="TreeGrafter"/>
</dbReference>
<dbReference type="GO" id="GO:0046348">
    <property type="term" value="P:amino sugar catabolic process"/>
    <property type="evidence" value="ECO:0007669"/>
    <property type="project" value="InterPro"/>
</dbReference>
<dbReference type="GO" id="GO:0097173">
    <property type="term" value="P:N-acetylmuramic acid catabolic process"/>
    <property type="evidence" value="ECO:0007669"/>
    <property type="project" value="UniProtKB-UniPathway"/>
</dbReference>
<dbReference type="GO" id="GO:0009254">
    <property type="term" value="P:peptidoglycan turnover"/>
    <property type="evidence" value="ECO:0007669"/>
    <property type="project" value="TreeGrafter"/>
</dbReference>
<dbReference type="CDD" id="cd05007">
    <property type="entry name" value="SIS_Etherase"/>
    <property type="match status" value="1"/>
</dbReference>
<dbReference type="FunFam" id="1.10.8.1080:FF:000001">
    <property type="entry name" value="N-acetylmuramic acid 6-phosphate etherase"/>
    <property type="match status" value="1"/>
</dbReference>
<dbReference type="FunFam" id="3.40.50.10490:FF:000014">
    <property type="entry name" value="N-acetylmuramic acid 6-phosphate etherase"/>
    <property type="match status" value="1"/>
</dbReference>
<dbReference type="Gene3D" id="1.10.8.1080">
    <property type="match status" value="1"/>
</dbReference>
<dbReference type="Gene3D" id="3.40.50.10490">
    <property type="entry name" value="Glucose-6-phosphate isomerase like protein, domain 1"/>
    <property type="match status" value="1"/>
</dbReference>
<dbReference type="HAMAP" id="MF_00068">
    <property type="entry name" value="MurQ"/>
    <property type="match status" value="1"/>
</dbReference>
<dbReference type="InterPro" id="IPR005488">
    <property type="entry name" value="Etherase_MurQ"/>
</dbReference>
<dbReference type="InterPro" id="IPR005486">
    <property type="entry name" value="Glucokinase_regulatory_CS"/>
</dbReference>
<dbReference type="InterPro" id="IPR040190">
    <property type="entry name" value="MURQ/GCKR"/>
</dbReference>
<dbReference type="InterPro" id="IPR001347">
    <property type="entry name" value="SIS_dom"/>
</dbReference>
<dbReference type="InterPro" id="IPR046348">
    <property type="entry name" value="SIS_dom_sf"/>
</dbReference>
<dbReference type="NCBIfam" id="TIGR00274">
    <property type="entry name" value="N-acetylmuramic acid 6-phosphate etherase"/>
    <property type="match status" value="1"/>
</dbReference>
<dbReference type="NCBIfam" id="NF003915">
    <property type="entry name" value="PRK05441.1"/>
    <property type="match status" value="1"/>
</dbReference>
<dbReference type="NCBIfam" id="NF009222">
    <property type="entry name" value="PRK12570.1"/>
    <property type="match status" value="1"/>
</dbReference>
<dbReference type="PANTHER" id="PTHR10088">
    <property type="entry name" value="GLUCOKINASE REGULATORY PROTEIN"/>
    <property type="match status" value="1"/>
</dbReference>
<dbReference type="PANTHER" id="PTHR10088:SF4">
    <property type="entry name" value="GLUCOKINASE REGULATORY PROTEIN"/>
    <property type="match status" value="1"/>
</dbReference>
<dbReference type="Pfam" id="PF22645">
    <property type="entry name" value="GKRP_SIS_N"/>
    <property type="match status" value="1"/>
</dbReference>
<dbReference type="SUPFAM" id="SSF53697">
    <property type="entry name" value="SIS domain"/>
    <property type="match status" value="1"/>
</dbReference>
<dbReference type="PROSITE" id="PS01272">
    <property type="entry name" value="GCKR"/>
    <property type="match status" value="1"/>
</dbReference>
<dbReference type="PROSITE" id="PS51464">
    <property type="entry name" value="SIS"/>
    <property type="match status" value="1"/>
</dbReference>
<feature type="chain" id="PRO_1000009125" description="N-acetylmuramic acid 6-phosphate etherase">
    <location>
        <begin position="1"/>
        <end position="298"/>
    </location>
</feature>
<feature type="domain" description="SIS" evidence="1">
    <location>
        <begin position="55"/>
        <end position="218"/>
    </location>
</feature>
<feature type="active site" description="Proton donor" evidence="1">
    <location>
        <position position="83"/>
    </location>
</feature>
<feature type="active site" evidence="1">
    <location>
        <position position="114"/>
    </location>
</feature>
<name>MURQ_MYCS2</name>
<evidence type="ECO:0000255" key="1">
    <source>
        <dbReference type="HAMAP-Rule" id="MF_00068"/>
    </source>
</evidence>
<keyword id="KW-0119">Carbohydrate metabolism</keyword>
<keyword id="KW-0456">Lyase</keyword>
<keyword id="KW-1185">Reference proteome</keyword>
<proteinExistence type="inferred from homology"/>
<comment type="function">
    <text evidence="1">Specifically catalyzes the cleavage of the D-lactyl ether substituent of MurNAc 6-phosphate, producing GlcNAc 6-phosphate and D-lactate.</text>
</comment>
<comment type="catalytic activity">
    <reaction evidence="1">
        <text>N-acetyl-D-muramate 6-phosphate + H2O = N-acetyl-D-glucosamine 6-phosphate + (R)-lactate</text>
        <dbReference type="Rhea" id="RHEA:26410"/>
        <dbReference type="ChEBI" id="CHEBI:15377"/>
        <dbReference type="ChEBI" id="CHEBI:16004"/>
        <dbReference type="ChEBI" id="CHEBI:57513"/>
        <dbReference type="ChEBI" id="CHEBI:58722"/>
        <dbReference type="EC" id="4.2.1.126"/>
    </reaction>
</comment>
<comment type="pathway">
    <text evidence="1">Amino-sugar metabolism; N-acetylmuramate degradation.</text>
</comment>
<comment type="subunit">
    <text evidence="1">Homodimer.</text>
</comment>
<comment type="miscellaneous">
    <text evidence="1">A lyase-type mechanism (elimination/hydration) is suggested for the cleavage of the lactyl ether bond of MurNAc 6-phosphate, with the formation of an alpha,beta-unsaturated aldehyde intermediate with (E)-stereochemistry, followed by the syn addition of water to give product.</text>
</comment>
<comment type="similarity">
    <text evidence="1">Belongs to the GCKR-like family. MurNAc-6-P etherase subfamily.</text>
</comment>
<reference key="1">
    <citation type="submission" date="2006-10" db="EMBL/GenBank/DDBJ databases">
        <authorList>
            <person name="Fleischmann R.D."/>
            <person name="Dodson R.J."/>
            <person name="Haft D.H."/>
            <person name="Merkel J.S."/>
            <person name="Nelson W.C."/>
            <person name="Fraser C.M."/>
        </authorList>
    </citation>
    <scope>NUCLEOTIDE SEQUENCE [LARGE SCALE GENOMIC DNA]</scope>
    <source>
        <strain>ATCC 700084 / mc(2)155</strain>
    </source>
</reference>
<reference key="2">
    <citation type="journal article" date="2007" name="Genome Biol.">
        <title>Interrupted coding sequences in Mycobacterium smegmatis: authentic mutations or sequencing errors?</title>
        <authorList>
            <person name="Deshayes C."/>
            <person name="Perrodou E."/>
            <person name="Gallien S."/>
            <person name="Euphrasie D."/>
            <person name="Schaeffer C."/>
            <person name="Van-Dorsselaer A."/>
            <person name="Poch O."/>
            <person name="Lecompte O."/>
            <person name="Reyrat J.-M."/>
        </authorList>
    </citation>
    <scope>NUCLEOTIDE SEQUENCE [LARGE SCALE GENOMIC DNA]</scope>
    <source>
        <strain>ATCC 700084 / mc(2)155</strain>
    </source>
</reference>
<reference key="3">
    <citation type="journal article" date="2009" name="Genome Res.">
        <title>Ortho-proteogenomics: multiple proteomes investigation through orthology and a new MS-based protocol.</title>
        <authorList>
            <person name="Gallien S."/>
            <person name="Perrodou E."/>
            <person name="Carapito C."/>
            <person name="Deshayes C."/>
            <person name="Reyrat J.-M."/>
            <person name="Van Dorsselaer A."/>
            <person name="Poch O."/>
            <person name="Schaeffer C."/>
            <person name="Lecompte O."/>
        </authorList>
    </citation>
    <scope>NUCLEOTIDE SEQUENCE [LARGE SCALE GENOMIC DNA]</scope>
    <source>
        <strain>ATCC 700084 / mc(2)155</strain>
    </source>
</reference>
<organism>
    <name type="scientific">Mycolicibacterium smegmatis (strain ATCC 700084 / mc(2)155)</name>
    <name type="common">Mycobacterium smegmatis</name>
    <dbReference type="NCBI Taxonomy" id="246196"/>
    <lineage>
        <taxon>Bacteria</taxon>
        <taxon>Bacillati</taxon>
        <taxon>Actinomycetota</taxon>
        <taxon>Actinomycetes</taxon>
        <taxon>Mycobacteriales</taxon>
        <taxon>Mycobacteriaceae</taxon>
        <taxon>Mycolicibacterium</taxon>
    </lineage>
</organism>
<sequence>MDLSALETEGRNTRTTELDRLTVPELLAVMNDEDRTVASAVRDVLDQIGAAVELITESLRRGGRLIYLGAGTSGRIGLLDAVECPPTFGTTPDQVVGLLSGGPGAFVTAVEGAEDQPERAADDLDAIGVSADDTVVGLAASGRTPYVVGGLQHARGAGAATVSIACNRDALVSRYADVAIEVLTGPEVLTGSTRLKAGTAEKMVCNMLSTASMVRLGKVYGNLMVDVRATNGKLVDRVRRIVVESTGAEPETAEQALAAADGHAKTAIVMLAAGCSADEAARRIERAGGDIRTAIGAG</sequence>
<gene>
    <name evidence="1" type="primary">murQ</name>
    <name type="ordered locus">MSMEG_0193</name>
    <name type="ordered locus">MSMEI_0188</name>
</gene>